<name>XGEA_ASPFU</name>
<feature type="signal peptide" evidence="2">
    <location>
        <begin position="1"/>
        <end position="18"/>
    </location>
</feature>
<feature type="chain" id="PRO_0000394072" description="Probable xyloglucan-specific endo-beta-1,4-glucanase A">
    <location>
        <begin position="19"/>
        <end position="238"/>
    </location>
</feature>
<feature type="glycosylation site" description="N-linked (GlcNAc...) asparagine" evidence="2">
    <location>
        <position position="106"/>
    </location>
</feature>
<feature type="glycosylation site" description="N-linked (GlcNAc...) asparagine" evidence="2">
    <location>
        <position position="171"/>
    </location>
</feature>
<reference key="1">
    <citation type="journal article" date="2005" name="Nature">
        <title>Genomic sequence of the pathogenic and allergenic filamentous fungus Aspergillus fumigatus.</title>
        <authorList>
            <person name="Nierman W.C."/>
            <person name="Pain A."/>
            <person name="Anderson M.J."/>
            <person name="Wortman J.R."/>
            <person name="Kim H.S."/>
            <person name="Arroyo J."/>
            <person name="Berriman M."/>
            <person name="Abe K."/>
            <person name="Archer D.B."/>
            <person name="Bermejo C."/>
            <person name="Bennett J.W."/>
            <person name="Bowyer P."/>
            <person name="Chen D."/>
            <person name="Collins M."/>
            <person name="Coulsen R."/>
            <person name="Davies R."/>
            <person name="Dyer P.S."/>
            <person name="Farman M.L."/>
            <person name="Fedorova N."/>
            <person name="Fedorova N.D."/>
            <person name="Feldblyum T.V."/>
            <person name="Fischer R."/>
            <person name="Fosker N."/>
            <person name="Fraser A."/>
            <person name="Garcia J.L."/>
            <person name="Garcia M.J."/>
            <person name="Goble A."/>
            <person name="Goldman G.H."/>
            <person name="Gomi K."/>
            <person name="Griffith-Jones S."/>
            <person name="Gwilliam R."/>
            <person name="Haas B.J."/>
            <person name="Haas H."/>
            <person name="Harris D.E."/>
            <person name="Horiuchi H."/>
            <person name="Huang J."/>
            <person name="Humphray S."/>
            <person name="Jimenez J."/>
            <person name="Keller N."/>
            <person name="Khouri H."/>
            <person name="Kitamoto K."/>
            <person name="Kobayashi T."/>
            <person name="Konzack S."/>
            <person name="Kulkarni R."/>
            <person name="Kumagai T."/>
            <person name="Lafton A."/>
            <person name="Latge J.-P."/>
            <person name="Li W."/>
            <person name="Lord A."/>
            <person name="Lu C."/>
            <person name="Majoros W.H."/>
            <person name="May G.S."/>
            <person name="Miller B.L."/>
            <person name="Mohamoud Y."/>
            <person name="Molina M."/>
            <person name="Monod M."/>
            <person name="Mouyna I."/>
            <person name="Mulligan S."/>
            <person name="Murphy L.D."/>
            <person name="O'Neil S."/>
            <person name="Paulsen I."/>
            <person name="Penalva M.A."/>
            <person name="Pertea M."/>
            <person name="Price C."/>
            <person name="Pritchard B.L."/>
            <person name="Quail M.A."/>
            <person name="Rabbinowitsch E."/>
            <person name="Rawlins N."/>
            <person name="Rajandream M.A."/>
            <person name="Reichard U."/>
            <person name="Renauld H."/>
            <person name="Robson G.D."/>
            <person name="Rodriguez de Cordoba S."/>
            <person name="Rodriguez-Pena J.M."/>
            <person name="Ronning C.M."/>
            <person name="Rutter S."/>
            <person name="Salzberg S.L."/>
            <person name="Sanchez M."/>
            <person name="Sanchez-Ferrero J.C."/>
            <person name="Saunders D."/>
            <person name="Seeger K."/>
            <person name="Squares R."/>
            <person name="Squares S."/>
            <person name="Takeuchi M."/>
            <person name="Tekaia F."/>
            <person name="Turner G."/>
            <person name="Vazquez de Aldana C.R."/>
            <person name="Weidman J."/>
            <person name="White O."/>
            <person name="Woodward J.R."/>
            <person name="Yu J.-H."/>
            <person name="Fraser C.M."/>
            <person name="Galagan J.E."/>
            <person name="Asai K."/>
            <person name="Machida M."/>
            <person name="Hall N."/>
            <person name="Barrell B.G."/>
            <person name="Denning D.W."/>
        </authorList>
    </citation>
    <scope>NUCLEOTIDE SEQUENCE [LARGE SCALE GENOMIC DNA]</scope>
    <source>
        <strain>ATCC MYA-4609 / CBS 101355 / FGSC A1100 / Af293</strain>
    </source>
</reference>
<organism>
    <name type="scientific">Aspergillus fumigatus (strain ATCC MYA-4609 / CBS 101355 / FGSC A1100 / Af293)</name>
    <name type="common">Neosartorya fumigata</name>
    <dbReference type="NCBI Taxonomy" id="330879"/>
    <lineage>
        <taxon>Eukaryota</taxon>
        <taxon>Fungi</taxon>
        <taxon>Dikarya</taxon>
        <taxon>Ascomycota</taxon>
        <taxon>Pezizomycotina</taxon>
        <taxon>Eurotiomycetes</taxon>
        <taxon>Eurotiomycetidae</taxon>
        <taxon>Eurotiales</taxon>
        <taxon>Aspergillaceae</taxon>
        <taxon>Aspergillus</taxon>
        <taxon>Aspergillus subgen. Fumigati</taxon>
    </lineage>
</organism>
<protein>
    <recommendedName>
        <fullName>Probable xyloglucan-specific endo-beta-1,4-glucanase A</fullName>
        <ecNumber>3.2.1.151</ecNumber>
    </recommendedName>
    <alternativeName>
        <fullName>Xyloglucanase A</fullName>
    </alternativeName>
    <alternativeName>
        <fullName>Xyloglucanendohydrolase A</fullName>
    </alternativeName>
</protein>
<accession>Q4WJU8</accession>
<proteinExistence type="inferred from homology"/>
<dbReference type="EC" id="3.2.1.151"/>
<dbReference type="EMBL" id="AAHF01000007">
    <property type="protein sequence ID" value="EAL88184.1"/>
    <property type="molecule type" value="Genomic_DNA"/>
</dbReference>
<dbReference type="RefSeq" id="XP_750222.1">
    <property type="nucleotide sequence ID" value="XM_745129.1"/>
</dbReference>
<dbReference type="SMR" id="Q4WJU8"/>
<dbReference type="STRING" id="330879.Q4WJU8"/>
<dbReference type="GlyCosmos" id="Q4WJU8">
    <property type="glycosylation" value="2 sites, No reported glycans"/>
</dbReference>
<dbReference type="EnsemblFungi" id="EAL88184">
    <property type="protein sequence ID" value="EAL88184"/>
    <property type="gene ID" value="AFUA_1G04730"/>
</dbReference>
<dbReference type="GeneID" id="3508001"/>
<dbReference type="KEGG" id="afm:AFUA_1G04730"/>
<dbReference type="VEuPathDB" id="FungiDB:Afu1g04730"/>
<dbReference type="eggNOG" id="ENOG502S675">
    <property type="taxonomic scope" value="Eukaryota"/>
</dbReference>
<dbReference type="HOGENOM" id="CLU_051064_0_1_1"/>
<dbReference type="InParanoid" id="Q4WJU8"/>
<dbReference type="OMA" id="NLWGQAQ"/>
<dbReference type="OrthoDB" id="95118at2759"/>
<dbReference type="Proteomes" id="UP000002530">
    <property type="component" value="Chromosome 1"/>
</dbReference>
<dbReference type="GO" id="GO:0005576">
    <property type="term" value="C:extracellular region"/>
    <property type="evidence" value="ECO:0007669"/>
    <property type="project" value="UniProtKB-SubCell"/>
</dbReference>
<dbReference type="GO" id="GO:0008810">
    <property type="term" value="F:cellulase activity"/>
    <property type="evidence" value="ECO:0007669"/>
    <property type="project" value="InterPro"/>
</dbReference>
<dbReference type="GO" id="GO:0016798">
    <property type="term" value="F:hydrolase activity, acting on glycosyl bonds"/>
    <property type="evidence" value="ECO:0000318"/>
    <property type="project" value="GO_Central"/>
</dbReference>
<dbReference type="GO" id="GO:0033946">
    <property type="term" value="F:xyloglucan-specific endo-beta-1,4-glucanase activity"/>
    <property type="evidence" value="ECO:0007669"/>
    <property type="project" value="UniProtKB-EC"/>
</dbReference>
<dbReference type="GO" id="GO:0071555">
    <property type="term" value="P:cell wall organization"/>
    <property type="evidence" value="ECO:0007669"/>
    <property type="project" value="UniProtKB-KW"/>
</dbReference>
<dbReference type="GO" id="GO:0000272">
    <property type="term" value="P:polysaccharide catabolic process"/>
    <property type="evidence" value="ECO:0007669"/>
    <property type="project" value="UniProtKB-KW"/>
</dbReference>
<dbReference type="Gene3D" id="2.60.120.180">
    <property type="match status" value="1"/>
</dbReference>
<dbReference type="InterPro" id="IPR013320">
    <property type="entry name" value="ConA-like_dom_sf"/>
</dbReference>
<dbReference type="InterPro" id="IPR013319">
    <property type="entry name" value="GH11/12"/>
</dbReference>
<dbReference type="InterPro" id="IPR002594">
    <property type="entry name" value="GH12"/>
</dbReference>
<dbReference type="PANTHER" id="PTHR34002">
    <property type="entry name" value="BLR1656 PROTEIN"/>
    <property type="match status" value="1"/>
</dbReference>
<dbReference type="PANTHER" id="PTHR34002:SF9">
    <property type="entry name" value="XYLOGLUCAN-SPECIFIC ENDO-BETA-1,4-GLUCANASE A"/>
    <property type="match status" value="1"/>
</dbReference>
<dbReference type="Pfam" id="PF01670">
    <property type="entry name" value="Glyco_hydro_12"/>
    <property type="match status" value="1"/>
</dbReference>
<dbReference type="SUPFAM" id="SSF49899">
    <property type="entry name" value="Concanavalin A-like lectins/glucanases"/>
    <property type="match status" value="1"/>
</dbReference>
<comment type="function">
    <text evidence="1">Catalyzes endohydrolysis of 1,4-beta-D-glucosidic linkages in xyloglucan with retention of the beta-configuration of the glycosyl residues. Specific for xyloglucan and does not hydrolyze other cell wall components (By similarity).</text>
</comment>
<comment type="catalytic activity">
    <reaction>
        <text>xyloglucan + H2O = xyloglucan oligosaccharides.</text>
        <dbReference type="EC" id="3.2.1.151"/>
    </reaction>
</comment>
<comment type="subcellular location">
    <subcellularLocation>
        <location evidence="3">Secreted</location>
    </subcellularLocation>
</comment>
<comment type="similarity">
    <text evidence="3">Belongs to the glycosyl hydrolase 12 (cellulase H) family.</text>
</comment>
<keyword id="KW-0119">Carbohydrate metabolism</keyword>
<keyword id="KW-0961">Cell wall biogenesis/degradation</keyword>
<keyword id="KW-0325">Glycoprotein</keyword>
<keyword id="KW-0326">Glycosidase</keyword>
<keyword id="KW-0378">Hydrolase</keyword>
<keyword id="KW-0624">Polysaccharide degradation</keyword>
<keyword id="KW-1185">Reference proteome</keyword>
<keyword id="KW-0964">Secreted</keyword>
<keyword id="KW-0732">Signal</keyword>
<gene>
    <name type="primary">xgeA</name>
    <name type="ORF">AFUA_1G04730</name>
</gene>
<evidence type="ECO:0000250" key="1"/>
<evidence type="ECO:0000255" key="2"/>
<evidence type="ECO:0000305" key="3"/>
<sequence length="238" mass="25314">MKLSLSVALSLAASTAQAATQFCDQWGSVTEGNYILYNNLWGQAQATSGSQCTTFESLSGNTIVWNTKWSWSGGQGQVKSFANAALQFTPKKLSSVKSIDSTWKWNYSGSNIVADVAYDMFLSTSPGGDHNYEIMVWLGALGGAGPISSTGSPIATPTVAGIKFNLYLGPNGSMQVYSFVAQSTTNSFSGDMRDFFTYLESNQGLSSDLYLVDVQAGTEPFSGSNAVFTVSDYSVSVA</sequence>